<feature type="chain" id="PRO_1000198040" description="Phosphomethylpyrimidine synthase">
    <location>
        <begin position="1"/>
        <end position="625"/>
    </location>
</feature>
<feature type="binding site" evidence="1">
    <location>
        <position position="231"/>
    </location>
    <ligand>
        <name>substrate</name>
    </ligand>
</feature>
<feature type="binding site" evidence="1">
    <location>
        <position position="260"/>
    </location>
    <ligand>
        <name>substrate</name>
    </ligand>
</feature>
<feature type="binding site" evidence="1">
    <location>
        <position position="289"/>
    </location>
    <ligand>
        <name>substrate</name>
    </ligand>
</feature>
<feature type="binding site" evidence="1">
    <location>
        <position position="325"/>
    </location>
    <ligand>
        <name>substrate</name>
    </ligand>
</feature>
<feature type="binding site" evidence="1">
    <location>
        <begin position="345"/>
        <end position="347"/>
    </location>
    <ligand>
        <name>substrate</name>
    </ligand>
</feature>
<feature type="binding site" evidence="1">
    <location>
        <begin position="386"/>
        <end position="389"/>
    </location>
    <ligand>
        <name>substrate</name>
    </ligand>
</feature>
<feature type="binding site" evidence="1">
    <location>
        <position position="425"/>
    </location>
    <ligand>
        <name>substrate</name>
    </ligand>
</feature>
<feature type="binding site" evidence="1">
    <location>
        <position position="429"/>
    </location>
    <ligand>
        <name>Zn(2+)</name>
        <dbReference type="ChEBI" id="CHEBI:29105"/>
    </ligand>
</feature>
<feature type="binding site" evidence="1">
    <location>
        <position position="452"/>
    </location>
    <ligand>
        <name>substrate</name>
    </ligand>
</feature>
<feature type="binding site" evidence="1">
    <location>
        <position position="493"/>
    </location>
    <ligand>
        <name>Zn(2+)</name>
        <dbReference type="ChEBI" id="CHEBI:29105"/>
    </ligand>
</feature>
<feature type="binding site" evidence="1">
    <location>
        <position position="573"/>
    </location>
    <ligand>
        <name>[4Fe-4S] cluster</name>
        <dbReference type="ChEBI" id="CHEBI:49883"/>
        <note>4Fe-4S-S-AdoMet</note>
    </ligand>
</feature>
<feature type="binding site" evidence="1">
    <location>
        <position position="576"/>
    </location>
    <ligand>
        <name>[4Fe-4S] cluster</name>
        <dbReference type="ChEBI" id="CHEBI:49883"/>
        <note>4Fe-4S-S-AdoMet</note>
    </ligand>
</feature>
<feature type="binding site" evidence="1">
    <location>
        <position position="581"/>
    </location>
    <ligand>
        <name>[4Fe-4S] cluster</name>
        <dbReference type="ChEBI" id="CHEBI:49883"/>
        <note>4Fe-4S-S-AdoMet</note>
    </ligand>
</feature>
<sequence length="625" mass="70172">MNQLTNLSSAEISAQHEQDAKDLTRILPASKKVYIEGSRPDIQVPMREISLTDTPTGLGGEHNPPIMVYDTSGVYTDPNVQIDLNKGLPSVRQKWIEERNDTDVLSGLTSKFGQERLKDIRTADIRFAHIQNPRRAKAGKNVTQMHYAKQGIITPEMEYIAIRENQRQREAVDMRQHPGQNFGAKNLKEITPEFVRQEVAEGRAIIPANINHPELEPMIIGRNFLVKINANIGNSALGSSIDEEVAKMTWATRWGADTIMDLSTGKNIHETREWIIRNSPVPIGTVPIYQALEKVDGVAENLTWEIFKDTLIEQAEQGVDYFTIHAGVLLRYVPLTANRLTGIVSRGGSIMAQWCLAHHEENFLYTHFDEICEIMKAYDVSFSLGDGLRPGCIQDANDEAQFSELKTLGELTHRAWEHDVQVMIEGPGHVPMHMIKENMDLQLEVCKEAPFYTLGPLTTDIAPGYDHITSAIGAAMIGWYGTAMLCYVTPKEHLGLPNKKDVKDGIITYKIAAHAADLAKGHPGAQVRDNALSKARFEFRWDDQFNLSLDPDTARSMHDETLPKEAHKSAHFCSMCGPKFCSMKITQNVRDYANNLTNSDSEVEEGLKAMKEVYQEQGQKLYHKV</sequence>
<dbReference type="EC" id="4.1.99.17" evidence="1"/>
<dbReference type="EMBL" id="CP001182">
    <property type="protein sequence ID" value="ACJ39766.1"/>
    <property type="molecule type" value="Genomic_DNA"/>
</dbReference>
<dbReference type="RefSeq" id="WP_001072861.1">
    <property type="nucleotide sequence ID" value="NC_011586.2"/>
</dbReference>
<dbReference type="SMR" id="B7I331"/>
<dbReference type="GeneID" id="92892250"/>
<dbReference type="KEGG" id="abn:AB57_0340"/>
<dbReference type="HOGENOM" id="CLU_013181_2_1_6"/>
<dbReference type="UniPathway" id="UPA00060"/>
<dbReference type="Proteomes" id="UP000007094">
    <property type="component" value="Chromosome"/>
</dbReference>
<dbReference type="GO" id="GO:0005829">
    <property type="term" value="C:cytosol"/>
    <property type="evidence" value="ECO:0007669"/>
    <property type="project" value="TreeGrafter"/>
</dbReference>
<dbReference type="GO" id="GO:0051539">
    <property type="term" value="F:4 iron, 4 sulfur cluster binding"/>
    <property type="evidence" value="ECO:0007669"/>
    <property type="project" value="UniProtKB-KW"/>
</dbReference>
<dbReference type="GO" id="GO:0016830">
    <property type="term" value="F:carbon-carbon lyase activity"/>
    <property type="evidence" value="ECO:0007669"/>
    <property type="project" value="InterPro"/>
</dbReference>
<dbReference type="GO" id="GO:0008270">
    <property type="term" value="F:zinc ion binding"/>
    <property type="evidence" value="ECO:0007669"/>
    <property type="project" value="UniProtKB-UniRule"/>
</dbReference>
<dbReference type="GO" id="GO:0009228">
    <property type="term" value="P:thiamine biosynthetic process"/>
    <property type="evidence" value="ECO:0007669"/>
    <property type="project" value="UniProtKB-KW"/>
</dbReference>
<dbReference type="GO" id="GO:0009229">
    <property type="term" value="P:thiamine diphosphate biosynthetic process"/>
    <property type="evidence" value="ECO:0007669"/>
    <property type="project" value="UniProtKB-UniRule"/>
</dbReference>
<dbReference type="FunFam" id="3.20.20.540:FF:000001">
    <property type="entry name" value="Phosphomethylpyrimidine synthase"/>
    <property type="match status" value="1"/>
</dbReference>
<dbReference type="Gene3D" id="6.10.250.620">
    <property type="match status" value="1"/>
</dbReference>
<dbReference type="Gene3D" id="3.20.20.540">
    <property type="entry name" value="Radical SAM ThiC family, central domain"/>
    <property type="match status" value="1"/>
</dbReference>
<dbReference type="HAMAP" id="MF_00089">
    <property type="entry name" value="ThiC"/>
    <property type="match status" value="1"/>
</dbReference>
<dbReference type="InterPro" id="IPR037509">
    <property type="entry name" value="ThiC"/>
</dbReference>
<dbReference type="InterPro" id="IPR025747">
    <property type="entry name" value="ThiC-associated_dom"/>
</dbReference>
<dbReference type="InterPro" id="IPR038521">
    <property type="entry name" value="ThiC/Bza_core_dom"/>
</dbReference>
<dbReference type="InterPro" id="IPR002817">
    <property type="entry name" value="ThiC/BzaA/B"/>
</dbReference>
<dbReference type="NCBIfam" id="NF006763">
    <property type="entry name" value="PRK09284.1"/>
    <property type="match status" value="1"/>
</dbReference>
<dbReference type="NCBIfam" id="NF009895">
    <property type="entry name" value="PRK13352.1"/>
    <property type="match status" value="1"/>
</dbReference>
<dbReference type="NCBIfam" id="TIGR00190">
    <property type="entry name" value="thiC"/>
    <property type="match status" value="1"/>
</dbReference>
<dbReference type="PANTHER" id="PTHR30557:SF1">
    <property type="entry name" value="PHOSPHOMETHYLPYRIMIDINE SYNTHASE, CHLOROPLASTIC"/>
    <property type="match status" value="1"/>
</dbReference>
<dbReference type="PANTHER" id="PTHR30557">
    <property type="entry name" value="THIAMINE BIOSYNTHESIS PROTEIN THIC"/>
    <property type="match status" value="1"/>
</dbReference>
<dbReference type="Pfam" id="PF13667">
    <property type="entry name" value="ThiC-associated"/>
    <property type="match status" value="1"/>
</dbReference>
<dbReference type="Pfam" id="PF01964">
    <property type="entry name" value="ThiC_Rad_SAM"/>
    <property type="match status" value="1"/>
</dbReference>
<dbReference type="SFLD" id="SFLDF00407">
    <property type="entry name" value="phosphomethylpyrimidine_syntha"/>
    <property type="match status" value="1"/>
</dbReference>
<dbReference type="SFLD" id="SFLDG01114">
    <property type="entry name" value="phosphomethylpyrimidine_syntha"/>
    <property type="match status" value="1"/>
</dbReference>
<dbReference type="SFLD" id="SFLDS00113">
    <property type="entry name" value="Radical_SAM_Phosphomethylpyrim"/>
    <property type="match status" value="1"/>
</dbReference>
<reference key="1">
    <citation type="journal article" date="2008" name="J. Bacteriol.">
        <title>Comparative genome sequence analysis of multidrug-resistant Acinetobacter baumannii.</title>
        <authorList>
            <person name="Adams M.D."/>
            <person name="Goglin K."/>
            <person name="Molyneaux N."/>
            <person name="Hujer K.M."/>
            <person name="Lavender H."/>
            <person name="Jamison J.J."/>
            <person name="MacDonald I.J."/>
            <person name="Martin K.M."/>
            <person name="Russo T."/>
            <person name="Campagnari A.A."/>
            <person name="Hujer A.M."/>
            <person name="Bonomo R.A."/>
            <person name="Gill S.R."/>
        </authorList>
    </citation>
    <scope>NUCLEOTIDE SEQUENCE [LARGE SCALE GENOMIC DNA]</scope>
    <source>
        <strain>AB0057</strain>
    </source>
</reference>
<organism>
    <name type="scientific">Acinetobacter baumannii (strain AB0057)</name>
    <dbReference type="NCBI Taxonomy" id="480119"/>
    <lineage>
        <taxon>Bacteria</taxon>
        <taxon>Pseudomonadati</taxon>
        <taxon>Pseudomonadota</taxon>
        <taxon>Gammaproteobacteria</taxon>
        <taxon>Moraxellales</taxon>
        <taxon>Moraxellaceae</taxon>
        <taxon>Acinetobacter</taxon>
        <taxon>Acinetobacter calcoaceticus/baumannii complex</taxon>
    </lineage>
</organism>
<name>THIC_ACIB5</name>
<gene>
    <name evidence="1" type="primary">thiC</name>
    <name type="ordered locus">AB57_0340</name>
</gene>
<comment type="function">
    <text evidence="1">Catalyzes the synthesis of the hydroxymethylpyrimidine phosphate (HMP-P) moiety of thiamine from aminoimidazole ribotide (AIR) in a radical S-adenosyl-L-methionine (SAM)-dependent reaction.</text>
</comment>
<comment type="catalytic activity">
    <reaction evidence="1">
        <text>5-amino-1-(5-phospho-beta-D-ribosyl)imidazole + S-adenosyl-L-methionine = 4-amino-2-methyl-5-(phosphooxymethyl)pyrimidine + CO + 5'-deoxyadenosine + formate + L-methionine + 3 H(+)</text>
        <dbReference type="Rhea" id="RHEA:24840"/>
        <dbReference type="ChEBI" id="CHEBI:15378"/>
        <dbReference type="ChEBI" id="CHEBI:15740"/>
        <dbReference type="ChEBI" id="CHEBI:17245"/>
        <dbReference type="ChEBI" id="CHEBI:17319"/>
        <dbReference type="ChEBI" id="CHEBI:57844"/>
        <dbReference type="ChEBI" id="CHEBI:58354"/>
        <dbReference type="ChEBI" id="CHEBI:59789"/>
        <dbReference type="ChEBI" id="CHEBI:137981"/>
        <dbReference type="EC" id="4.1.99.17"/>
    </reaction>
</comment>
<comment type="cofactor">
    <cofactor evidence="1">
        <name>[4Fe-4S] cluster</name>
        <dbReference type="ChEBI" id="CHEBI:49883"/>
    </cofactor>
    <text evidence="1">Binds 1 [4Fe-4S] cluster per subunit. The cluster is coordinated with 3 cysteines and an exchangeable S-adenosyl-L-methionine.</text>
</comment>
<comment type="pathway">
    <text evidence="1">Cofactor biosynthesis; thiamine diphosphate biosynthesis.</text>
</comment>
<comment type="subunit">
    <text evidence="1">Homodimer.</text>
</comment>
<comment type="similarity">
    <text evidence="1">Belongs to the ThiC family.</text>
</comment>
<protein>
    <recommendedName>
        <fullName evidence="1">Phosphomethylpyrimidine synthase</fullName>
        <ecNumber evidence="1">4.1.99.17</ecNumber>
    </recommendedName>
    <alternativeName>
        <fullName evidence="1">Hydroxymethylpyrimidine phosphate synthase</fullName>
        <shortName evidence="1">HMP-P synthase</shortName>
        <shortName evidence="1">HMP-phosphate synthase</shortName>
        <shortName evidence="1">HMPP synthase</shortName>
    </alternativeName>
    <alternativeName>
        <fullName evidence="1">Thiamine biosynthesis protein ThiC</fullName>
    </alternativeName>
</protein>
<keyword id="KW-0004">4Fe-4S</keyword>
<keyword id="KW-0408">Iron</keyword>
<keyword id="KW-0411">Iron-sulfur</keyword>
<keyword id="KW-0456">Lyase</keyword>
<keyword id="KW-0479">Metal-binding</keyword>
<keyword id="KW-0949">S-adenosyl-L-methionine</keyword>
<keyword id="KW-0784">Thiamine biosynthesis</keyword>
<keyword id="KW-0862">Zinc</keyword>
<proteinExistence type="inferred from homology"/>
<accession>B7I331</accession>
<evidence type="ECO:0000255" key="1">
    <source>
        <dbReference type="HAMAP-Rule" id="MF_00089"/>
    </source>
</evidence>